<proteinExistence type="inferred from homology"/>
<accession>Q21WT2</accession>
<comment type="catalytic activity">
    <reaction evidence="1">
        <text>(S)-2,3,4,5-tetrahydrodipicolinate + succinyl-CoA + H2O = (S)-2-succinylamino-6-oxoheptanedioate + CoA</text>
        <dbReference type="Rhea" id="RHEA:17325"/>
        <dbReference type="ChEBI" id="CHEBI:15377"/>
        <dbReference type="ChEBI" id="CHEBI:15685"/>
        <dbReference type="ChEBI" id="CHEBI:16845"/>
        <dbReference type="ChEBI" id="CHEBI:57287"/>
        <dbReference type="ChEBI" id="CHEBI:57292"/>
        <dbReference type="EC" id="2.3.1.117"/>
    </reaction>
</comment>
<comment type="pathway">
    <text evidence="1">Amino-acid biosynthesis; L-lysine biosynthesis via DAP pathway; LL-2,6-diaminopimelate from (S)-tetrahydrodipicolinate (succinylase route): step 1/3.</text>
</comment>
<comment type="subunit">
    <text evidence="1">Homotrimer.</text>
</comment>
<comment type="subcellular location">
    <subcellularLocation>
        <location evidence="1">Cytoplasm</location>
    </subcellularLocation>
</comment>
<comment type="similarity">
    <text evidence="1">Belongs to the transferase hexapeptide repeat family.</text>
</comment>
<dbReference type="EC" id="2.3.1.117" evidence="1"/>
<dbReference type="EMBL" id="CP000267">
    <property type="protein sequence ID" value="ABD69771.1"/>
    <property type="molecule type" value="Genomic_DNA"/>
</dbReference>
<dbReference type="RefSeq" id="WP_011464339.1">
    <property type="nucleotide sequence ID" value="NC_007908.1"/>
</dbReference>
<dbReference type="SMR" id="Q21WT2"/>
<dbReference type="STRING" id="338969.Rfer_2046"/>
<dbReference type="KEGG" id="rfr:Rfer_2046"/>
<dbReference type="eggNOG" id="COG2171">
    <property type="taxonomic scope" value="Bacteria"/>
</dbReference>
<dbReference type="HOGENOM" id="CLU_050859_0_1_4"/>
<dbReference type="OrthoDB" id="9775362at2"/>
<dbReference type="UniPathway" id="UPA00034">
    <property type="reaction ID" value="UER00019"/>
</dbReference>
<dbReference type="Proteomes" id="UP000008332">
    <property type="component" value="Chromosome"/>
</dbReference>
<dbReference type="GO" id="GO:0005737">
    <property type="term" value="C:cytoplasm"/>
    <property type="evidence" value="ECO:0007669"/>
    <property type="project" value="UniProtKB-SubCell"/>
</dbReference>
<dbReference type="GO" id="GO:0008666">
    <property type="term" value="F:2,3,4,5-tetrahydropyridine-2,6-dicarboxylate N-succinyltransferase activity"/>
    <property type="evidence" value="ECO:0007669"/>
    <property type="project" value="UniProtKB-UniRule"/>
</dbReference>
<dbReference type="GO" id="GO:0016779">
    <property type="term" value="F:nucleotidyltransferase activity"/>
    <property type="evidence" value="ECO:0007669"/>
    <property type="project" value="TreeGrafter"/>
</dbReference>
<dbReference type="GO" id="GO:0019877">
    <property type="term" value="P:diaminopimelate biosynthetic process"/>
    <property type="evidence" value="ECO:0007669"/>
    <property type="project" value="UniProtKB-UniRule"/>
</dbReference>
<dbReference type="GO" id="GO:0009089">
    <property type="term" value="P:lysine biosynthetic process via diaminopimelate"/>
    <property type="evidence" value="ECO:0007669"/>
    <property type="project" value="UniProtKB-UniRule"/>
</dbReference>
<dbReference type="CDD" id="cd03350">
    <property type="entry name" value="LbH_THP_succinylT"/>
    <property type="match status" value="1"/>
</dbReference>
<dbReference type="Gene3D" id="2.160.10.10">
    <property type="entry name" value="Hexapeptide repeat proteins"/>
    <property type="match status" value="1"/>
</dbReference>
<dbReference type="Gene3D" id="1.10.166.10">
    <property type="entry name" value="Tetrahydrodipicolinate-N-succinyltransferase, N-terminal domain"/>
    <property type="match status" value="1"/>
</dbReference>
<dbReference type="HAMAP" id="MF_00811">
    <property type="entry name" value="DapD"/>
    <property type="match status" value="1"/>
</dbReference>
<dbReference type="InterPro" id="IPR005664">
    <property type="entry name" value="DapD_Trfase_Hexpep_rpt_fam"/>
</dbReference>
<dbReference type="InterPro" id="IPR001451">
    <property type="entry name" value="Hexapep"/>
</dbReference>
<dbReference type="InterPro" id="IPR018357">
    <property type="entry name" value="Hexapep_transf_CS"/>
</dbReference>
<dbReference type="InterPro" id="IPR023180">
    <property type="entry name" value="THP_succinylTrfase_dom1"/>
</dbReference>
<dbReference type="InterPro" id="IPR037133">
    <property type="entry name" value="THP_succinylTrfase_N_sf"/>
</dbReference>
<dbReference type="InterPro" id="IPR011004">
    <property type="entry name" value="Trimer_LpxA-like_sf"/>
</dbReference>
<dbReference type="NCBIfam" id="TIGR00965">
    <property type="entry name" value="dapD"/>
    <property type="match status" value="1"/>
</dbReference>
<dbReference type="NCBIfam" id="NF008808">
    <property type="entry name" value="PRK11830.1"/>
    <property type="match status" value="1"/>
</dbReference>
<dbReference type="PANTHER" id="PTHR19136:SF52">
    <property type="entry name" value="2,3,4,5-TETRAHYDROPYRIDINE-2,6-DICARBOXYLATE N-SUCCINYLTRANSFERASE"/>
    <property type="match status" value="1"/>
</dbReference>
<dbReference type="PANTHER" id="PTHR19136">
    <property type="entry name" value="MOLYBDENUM COFACTOR GUANYLYLTRANSFERASE"/>
    <property type="match status" value="1"/>
</dbReference>
<dbReference type="Pfam" id="PF14602">
    <property type="entry name" value="Hexapep_2"/>
    <property type="match status" value="1"/>
</dbReference>
<dbReference type="Pfam" id="PF14805">
    <property type="entry name" value="THDPS_N_2"/>
    <property type="match status" value="1"/>
</dbReference>
<dbReference type="SUPFAM" id="SSF51161">
    <property type="entry name" value="Trimeric LpxA-like enzymes"/>
    <property type="match status" value="1"/>
</dbReference>
<dbReference type="PROSITE" id="PS00101">
    <property type="entry name" value="HEXAPEP_TRANSFERASES"/>
    <property type="match status" value="1"/>
</dbReference>
<name>DAPD_ALBFT</name>
<protein>
    <recommendedName>
        <fullName evidence="1">2,3,4,5-tetrahydropyridine-2,6-dicarboxylate N-succinyltransferase</fullName>
        <ecNumber evidence="1">2.3.1.117</ecNumber>
    </recommendedName>
    <alternativeName>
        <fullName evidence="1">Tetrahydrodipicolinate N-succinyltransferase</fullName>
        <shortName evidence="1">THDP succinyltransferase</shortName>
        <shortName evidence="1">THP succinyltransferase</shortName>
        <shortName evidence="1">Tetrahydropicolinate succinylase</shortName>
    </alternativeName>
</protein>
<gene>
    <name evidence="1" type="primary">dapD</name>
    <name type="ordered locus">Rfer_2046</name>
</gene>
<evidence type="ECO:0000255" key="1">
    <source>
        <dbReference type="HAMAP-Rule" id="MF_00811"/>
    </source>
</evidence>
<keyword id="KW-0012">Acyltransferase</keyword>
<keyword id="KW-0028">Amino-acid biosynthesis</keyword>
<keyword id="KW-0963">Cytoplasm</keyword>
<keyword id="KW-0220">Diaminopimelate biosynthesis</keyword>
<keyword id="KW-0457">Lysine biosynthesis</keyword>
<keyword id="KW-1185">Reference proteome</keyword>
<keyword id="KW-0677">Repeat</keyword>
<keyword id="KW-0808">Transferase</keyword>
<reference key="1">
    <citation type="submission" date="2006-02" db="EMBL/GenBank/DDBJ databases">
        <title>Complete sequence of chromosome of Rhodoferax ferrireducens DSM 15236.</title>
        <authorList>
            <person name="Copeland A."/>
            <person name="Lucas S."/>
            <person name="Lapidus A."/>
            <person name="Barry K."/>
            <person name="Detter J.C."/>
            <person name="Glavina del Rio T."/>
            <person name="Hammon N."/>
            <person name="Israni S."/>
            <person name="Pitluck S."/>
            <person name="Brettin T."/>
            <person name="Bruce D."/>
            <person name="Han C."/>
            <person name="Tapia R."/>
            <person name="Gilna P."/>
            <person name="Kiss H."/>
            <person name="Schmutz J."/>
            <person name="Larimer F."/>
            <person name="Land M."/>
            <person name="Kyrpides N."/>
            <person name="Ivanova N."/>
            <person name="Richardson P."/>
        </authorList>
    </citation>
    <scope>NUCLEOTIDE SEQUENCE [LARGE SCALE GENOMIC DNA]</scope>
    <source>
        <strain>ATCC BAA-621 / DSM 15236 / T118</strain>
    </source>
</reference>
<sequence>MTQQLQSIIDAAWEDRANLSSAAAPKEVLDAVEHVISDLNAGRLRVATRESVGQWTTHQWIKKAVLLSFRLTDNQVMKAGDLGFYDKVPTKFAHLDEEAMKASGVRVVPPAVARRGSYLAKGVILMPSYVNIGAYVDEGTMVDTWATVGSCAQIGKHVHLSGGVGIGGVLEPMQAGPTIIEDNCFIGARSEVVEGVIVEENSVISMGVYLGQSTPIYDRATDTVSYGRIPSGSVVISGSLPKNEGKYSLYAAIIVKRVDAQTRAKTSLNDLLRD</sequence>
<organism>
    <name type="scientific">Albidiferax ferrireducens (strain ATCC BAA-621 / DSM 15236 / T118)</name>
    <name type="common">Rhodoferax ferrireducens</name>
    <dbReference type="NCBI Taxonomy" id="338969"/>
    <lineage>
        <taxon>Bacteria</taxon>
        <taxon>Pseudomonadati</taxon>
        <taxon>Pseudomonadota</taxon>
        <taxon>Betaproteobacteria</taxon>
        <taxon>Burkholderiales</taxon>
        <taxon>Comamonadaceae</taxon>
        <taxon>Rhodoferax</taxon>
    </lineage>
</organism>
<feature type="chain" id="PRO_1000047169" description="2,3,4,5-tetrahydropyridine-2,6-dicarboxylate N-succinyltransferase">
    <location>
        <begin position="1"/>
        <end position="274"/>
    </location>
</feature>
<feature type="binding site" evidence="1">
    <location>
        <position position="106"/>
    </location>
    <ligand>
        <name>substrate</name>
    </ligand>
</feature>
<feature type="binding site" evidence="1">
    <location>
        <position position="143"/>
    </location>
    <ligand>
        <name>substrate</name>
    </ligand>
</feature>